<reference key="1">
    <citation type="journal article" date="2005" name="J. Bacteriol.">
        <title>Insights on evolution of virulence and resistance from the complete genome analysis of an early methicillin-resistant Staphylococcus aureus strain and a biofilm-producing methicillin-resistant Staphylococcus epidermidis strain.</title>
        <authorList>
            <person name="Gill S.R."/>
            <person name="Fouts D.E."/>
            <person name="Archer G.L."/>
            <person name="Mongodin E.F."/>
            <person name="DeBoy R.T."/>
            <person name="Ravel J."/>
            <person name="Paulsen I.T."/>
            <person name="Kolonay J.F."/>
            <person name="Brinkac L.M."/>
            <person name="Beanan M.J."/>
            <person name="Dodson R.J."/>
            <person name="Daugherty S.C."/>
            <person name="Madupu R."/>
            <person name="Angiuoli S.V."/>
            <person name="Durkin A.S."/>
            <person name="Haft D.H."/>
            <person name="Vamathevan J.J."/>
            <person name="Khouri H."/>
            <person name="Utterback T.R."/>
            <person name="Lee C."/>
            <person name="Dimitrov G."/>
            <person name="Jiang L."/>
            <person name="Qin H."/>
            <person name="Weidman J."/>
            <person name="Tran K."/>
            <person name="Kang K.H."/>
            <person name="Hance I.R."/>
            <person name="Nelson K.E."/>
            <person name="Fraser C.M."/>
        </authorList>
    </citation>
    <scope>NUCLEOTIDE SEQUENCE [LARGE SCALE GENOMIC DNA]</scope>
    <source>
        <strain>COL</strain>
    </source>
</reference>
<sequence>MQFFNFLLFYPVFMSIYWIVGSIYFYFTREIRYSLNKKPDINVDELEGITFLLACYNESETIEDTLSNVLALKYEKKEIIIINDGSSDNTAELIYKIKENNDFIFVDLQENRGKANALNQGIKQASYDYVMCLDADTIVDQDAPYYMIENFKHDPKLGAVTGNPRIRNKSSILGKIQTIEYASLIGCIKRSQTLAGAVNTISGVFTLFKKSAVVDVGYWDTDMITEDIAVSWKLHLRGYRIKYEPLAMCWMLVPETLGGLWKQRVRWAQGGHEVLLRDFFSTMKTKRFPLYILMFEQIISILWVYIVLLYLGYLFITANFLDYTFMTYSFSIFLLSSFTMTFINVIQFTVALFIDSRYEKKNMAGLIFVSWYPTVYWIINAAVVLVAFPKALKRKKGGYATWSSPDRGNTQR</sequence>
<accession>Q5HCN1</accession>
<feature type="chain" id="PRO_0000059276" description="Poly-beta-1,6-N-acetyl-D-glucosamine synthase">
    <location>
        <begin position="1"/>
        <end position="412"/>
    </location>
</feature>
<feature type="transmembrane region" description="Helical" evidence="2">
    <location>
        <begin position="6"/>
        <end position="28"/>
    </location>
</feature>
<feature type="transmembrane region" description="Helical" evidence="2">
    <location>
        <begin position="290"/>
        <end position="312"/>
    </location>
</feature>
<feature type="transmembrane region" description="Helical" evidence="2">
    <location>
        <begin position="332"/>
        <end position="354"/>
    </location>
</feature>
<feature type="transmembrane region" description="Helical" evidence="2">
    <location>
        <begin position="366"/>
        <end position="388"/>
    </location>
</feature>
<proteinExistence type="inferred from homology"/>
<keyword id="KW-1003">Cell membrane</keyword>
<keyword id="KW-0328">Glycosyltransferase</keyword>
<keyword id="KW-0472">Membrane</keyword>
<keyword id="KW-0808">Transferase</keyword>
<keyword id="KW-0812">Transmembrane</keyword>
<keyword id="KW-1133">Transmembrane helix</keyword>
<dbReference type="EC" id="2.4.1.-"/>
<dbReference type="EMBL" id="CP000046">
    <property type="protein sequence ID" value="AAW38686.1"/>
    <property type="molecule type" value="Genomic_DNA"/>
</dbReference>
<dbReference type="RefSeq" id="WP_001159430.1">
    <property type="nucleotide sequence ID" value="NZ_JBGOFO010000001.1"/>
</dbReference>
<dbReference type="SMR" id="Q5HCN1"/>
<dbReference type="CAZy" id="GT2">
    <property type="family name" value="Glycosyltransferase Family 2"/>
</dbReference>
<dbReference type="KEGG" id="sac:SACOL2689"/>
<dbReference type="HOGENOM" id="CLU_023978_0_1_9"/>
<dbReference type="Proteomes" id="UP000000530">
    <property type="component" value="Chromosome"/>
</dbReference>
<dbReference type="GO" id="GO:0005886">
    <property type="term" value="C:plasma membrane"/>
    <property type="evidence" value="ECO:0007669"/>
    <property type="project" value="UniProtKB-SubCell"/>
</dbReference>
<dbReference type="GO" id="GO:0008375">
    <property type="term" value="F:acetylglucosaminyltransferase activity"/>
    <property type="evidence" value="ECO:0007669"/>
    <property type="project" value="InterPro"/>
</dbReference>
<dbReference type="GO" id="GO:0043708">
    <property type="term" value="P:cell adhesion involved in biofilm formation"/>
    <property type="evidence" value="ECO:0007669"/>
    <property type="project" value="InterPro"/>
</dbReference>
<dbReference type="CDD" id="cd06423">
    <property type="entry name" value="CESA_like"/>
    <property type="match status" value="1"/>
</dbReference>
<dbReference type="Gene3D" id="3.90.550.10">
    <property type="entry name" value="Spore Coat Polysaccharide Biosynthesis Protein SpsA, Chain A"/>
    <property type="match status" value="1"/>
</dbReference>
<dbReference type="InterPro" id="IPR001173">
    <property type="entry name" value="Glyco_trans_2-like"/>
</dbReference>
<dbReference type="InterPro" id="IPR029044">
    <property type="entry name" value="Nucleotide-diphossugar_trans"/>
</dbReference>
<dbReference type="InterPro" id="IPR023853">
    <property type="entry name" value="PGA_PgaC/IcaA"/>
</dbReference>
<dbReference type="NCBIfam" id="TIGR03937">
    <property type="entry name" value="PgaC_IcaA"/>
    <property type="match status" value="1"/>
</dbReference>
<dbReference type="PANTHER" id="PTHR43630">
    <property type="entry name" value="POLY-BETA-1,6-N-ACETYL-D-GLUCOSAMINE SYNTHASE"/>
    <property type="match status" value="1"/>
</dbReference>
<dbReference type="PANTHER" id="PTHR43630:SF1">
    <property type="entry name" value="POLY-BETA-1,6-N-ACETYL-D-GLUCOSAMINE SYNTHASE"/>
    <property type="match status" value="1"/>
</dbReference>
<dbReference type="Pfam" id="PF00535">
    <property type="entry name" value="Glycos_transf_2"/>
    <property type="match status" value="1"/>
</dbReference>
<dbReference type="SUPFAM" id="SSF53448">
    <property type="entry name" value="Nucleotide-diphospho-sugar transferases"/>
    <property type="match status" value="1"/>
</dbReference>
<protein>
    <recommendedName>
        <fullName>Poly-beta-1,6-N-acetyl-D-glucosamine synthase</fullName>
        <shortName>PNAG synthase</shortName>
        <shortName>Poly-beta-1,6-GlcNAc synthase</shortName>
        <ecNumber>2.4.1.-</ecNumber>
    </recommendedName>
    <alternativeName>
        <fullName>Biofilm polysaccharide intercellular adhesin synthesis protein IcaA</fullName>
        <shortName>Biofilm PIA synthesis protein IcaA</shortName>
    </alternativeName>
    <alternativeName>
        <fullName>Intercellular adhesion protein A</fullName>
    </alternativeName>
    <alternativeName>
        <fullName>N-acetylglucosaminyltransferase IcaA</fullName>
    </alternativeName>
</protein>
<comment type="function">
    <text evidence="1">N-acetylglucosaminyltransferase that catalyzes the polymerization of single monomer units of UDP-N-acetylglucosamine to produce the linear homomer poly-beta-1,6-N-acetyl-D-glucosamine (PNAG, also referred to as PIA), a biofilm adhesin polysaccharide. Requires IcaD for full activity (By similarity).</text>
</comment>
<comment type="subcellular location">
    <subcellularLocation>
        <location evidence="1">Cell membrane</location>
        <topology evidence="1">Multi-pass membrane protein</topology>
    </subcellularLocation>
</comment>
<comment type="miscellaneous">
    <text>In strain COL, the gene icaC is interrupted by a natural frameshift.</text>
</comment>
<comment type="similarity">
    <text evidence="3">Belongs to the glycosyltransferase 2 family.</text>
</comment>
<evidence type="ECO:0000250" key="1"/>
<evidence type="ECO:0000255" key="2"/>
<evidence type="ECO:0000305" key="3"/>
<organism>
    <name type="scientific">Staphylococcus aureus (strain COL)</name>
    <dbReference type="NCBI Taxonomy" id="93062"/>
    <lineage>
        <taxon>Bacteria</taxon>
        <taxon>Bacillati</taxon>
        <taxon>Bacillota</taxon>
        <taxon>Bacilli</taxon>
        <taxon>Bacillales</taxon>
        <taxon>Staphylococcaceae</taxon>
        <taxon>Staphylococcus</taxon>
    </lineage>
</organism>
<gene>
    <name type="primary">icaA</name>
    <name type="ordered locus">SACOL2689</name>
</gene>
<name>ICAA_STAAC</name>